<organism>
    <name type="scientific">Synechocystis sp. (strain ATCC 27184 / PCC 6803 / Kazusa)</name>
    <dbReference type="NCBI Taxonomy" id="1111708"/>
    <lineage>
        <taxon>Bacteria</taxon>
        <taxon>Bacillati</taxon>
        <taxon>Cyanobacteriota</taxon>
        <taxon>Cyanophyceae</taxon>
        <taxon>Synechococcales</taxon>
        <taxon>Merismopediaceae</taxon>
        <taxon>Synechocystis</taxon>
    </lineage>
</organism>
<name>RL22_SYNY3</name>
<keyword id="KW-1185">Reference proteome</keyword>
<keyword id="KW-0687">Ribonucleoprotein</keyword>
<keyword id="KW-0689">Ribosomal protein</keyword>
<keyword id="KW-0694">RNA-binding</keyword>
<keyword id="KW-0699">rRNA-binding</keyword>
<gene>
    <name evidence="1" type="primary">rplV</name>
    <name evidence="1" type="synonym">rpl22</name>
    <name type="ordered locus">sll1803</name>
</gene>
<proteinExistence type="inferred from homology"/>
<accession>P73315</accession>
<protein>
    <recommendedName>
        <fullName evidence="1">Large ribosomal subunit protein uL22</fullName>
    </recommendedName>
    <alternativeName>
        <fullName evidence="2">50S ribosomal protein L22</fullName>
    </alternativeName>
</protein>
<feature type="chain" id="PRO_0000125246" description="Large ribosomal subunit protein uL22">
    <location>
        <begin position="1"/>
        <end position="121"/>
    </location>
</feature>
<dbReference type="EMBL" id="BA000022">
    <property type="protein sequence ID" value="BAA17344.1"/>
    <property type="molecule type" value="Genomic_DNA"/>
</dbReference>
<dbReference type="PIR" id="S77497">
    <property type="entry name" value="S77497"/>
</dbReference>
<dbReference type="SMR" id="P73315"/>
<dbReference type="FunCoup" id="P73315">
    <property type="interactions" value="468"/>
</dbReference>
<dbReference type="IntAct" id="P73315">
    <property type="interactions" value="2"/>
</dbReference>
<dbReference type="STRING" id="1148.gene:10498207"/>
<dbReference type="PaxDb" id="1148-1652422"/>
<dbReference type="EnsemblBacteria" id="BAA17344">
    <property type="protein sequence ID" value="BAA17344"/>
    <property type="gene ID" value="BAA17344"/>
</dbReference>
<dbReference type="KEGG" id="syn:sll1803"/>
<dbReference type="eggNOG" id="COG0091">
    <property type="taxonomic scope" value="Bacteria"/>
</dbReference>
<dbReference type="InParanoid" id="P73315"/>
<dbReference type="PhylomeDB" id="P73315"/>
<dbReference type="Proteomes" id="UP000001425">
    <property type="component" value="Chromosome"/>
</dbReference>
<dbReference type="GO" id="GO:0022625">
    <property type="term" value="C:cytosolic large ribosomal subunit"/>
    <property type="evidence" value="ECO:0000318"/>
    <property type="project" value="GO_Central"/>
</dbReference>
<dbReference type="GO" id="GO:0019843">
    <property type="term" value="F:rRNA binding"/>
    <property type="evidence" value="ECO:0007669"/>
    <property type="project" value="UniProtKB-UniRule"/>
</dbReference>
<dbReference type="GO" id="GO:0003735">
    <property type="term" value="F:structural constituent of ribosome"/>
    <property type="evidence" value="ECO:0000318"/>
    <property type="project" value="GO_Central"/>
</dbReference>
<dbReference type="GO" id="GO:0006412">
    <property type="term" value="P:translation"/>
    <property type="evidence" value="ECO:0000318"/>
    <property type="project" value="GO_Central"/>
</dbReference>
<dbReference type="CDD" id="cd00336">
    <property type="entry name" value="Ribosomal_L22"/>
    <property type="match status" value="1"/>
</dbReference>
<dbReference type="FunFam" id="3.90.470.10:FF:000004">
    <property type="entry name" value="50S ribosomal protein L22, chloroplastic"/>
    <property type="match status" value="1"/>
</dbReference>
<dbReference type="Gene3D" id="3.90.470.10">
    <property type="entry name" value="Ribosomal protein L22/L17"/>
    <property type="match status" value="1"/>
</dbReference>
<dbReference type="HAMAP" id="MF_01331_B">
    <property type="entry name" value="Ribosomal_uL22_B"/>
    <property type="match status" value="1"/>
</dbReference>
<dbReference type="InterPro" id="IPR001063">
    <property type="entry name" value="Ribosomal_uL22"/>
</dbReference>
<dbReference type="InterPro" id="IPR005727">
    <property type="entry name" value="Ribosomal_uL22_bac/chlpt-type"/>
</dbReference>
<dbReference type="InterPro" id="IPR047867">
    <property type="entry name" value="Ribosomal_uL22_bac/org-type"/>
</dbReference>
<dbReference type="InterPro" id="IPR018260">
    <property type="entry name" value="Ribosomal_uL22_CS"/>
</dbReference>
<dbReference type="InterPro" id="IPR036394">
    <property type="entry name" value="Ribosomal_uL22_sf"/>
</dbReference>
<dbReference type="NCBIfam" id="TIGR01044">
    <property type="entry name" value="rplV_bact"/>
    <property type="match status" value="1"/>
</dbReference>
<dbReference type="PANTHER" id="PTHR13501">
    <property type="entry name" value="CHLOROPLAST 50S RIBOSOMAL PROTEIN L22-RELATED"/>
    <property type="match status" value="1"/>
</dbReference>
<dbReference type="PANTHER" id="PTHR13501:SF8">
    <property type="entry name" value="LARGE RIBOSOMAL SUBUNIT PROTEIN UL22M"/>
    <property type="match status" value="1"/>
</dbReference>
<dbReference type="Pfam" id="PF00237">
    <property type="entry name" value="Ribosomal_L22"/>
    <property type="match status" value="1"/>
</dbReference>
<dbReference type="SUPFAM" id="SSF54843">
    <property type="entry name" value="Ribosomal protein L22"/>
    <property type="match status" value="1"/>
</dbReference>
<dbReference type="PROSITE" id="PS00464">
    <property type="entry name" value="RIBOSOMAL_L22"/>
    <property type="match status" value="1"/>
</dbReference>
<reference key="1">
    <citation type="journal article" date="1996" name="DNA Res.">
        <title>Sequence analysis of the genome of the unicellular cyanobacterium Synechocystis sp. strain PCC6803. II. Sequence determination of the entire genome and assignment of potential protein-coding regions.</title>
        <authorList>
            <person name="Kaneko T."/>
            <person name="Sato S."/>
            <person name="Kotani H."/>
            <person name="Tanaka A."/>
            <person name="Asamizu E."/>
            <person name="Nakamura Y."/>
            <person name="Miyajima N."/>
            <person name="Hirosawa M."/>
            <person name="Sugiura M."/>
            <person name="Sasamoto S."/>
            <person name="Kimura T."/>
            <person name="Hosouchi T."/>
            <person name="Matsuno A."/>
            <person name="Muraki A."/>
            <person name="Nakazaki N."/>
            <person name="Naruo K."/>
            <person name="Okumura S."/>
            <person name="Shimpo S."/>
            <person name="Takeuchi C."/>
            <person name="Wada T."/>
            <person name="Watanabe A."/>
            <person name="Yamada M."/>
            <person name="Yasuda M."/>
            <person name="Tabata S."/>
        </authorList>
    </citation>
    <scope>NUCLEOTIDE SEQUENCE [LARGE SCALE GENOMIC DNA]</scope>
    <source>
        <strain>ATCC 27184 / PCC 6803 / Kazusa</strain>
    </source>
</reference>
<evidence type="ECO:0000255" key="1">
    <source>
        <dbReference type="HAMAP-Rule" id="MF_01331"/>
    </source>
</evidence>
<evidence type="ECO:0000305" key="2"/>
<comment type="function">
    <text evidence="1">This protein binds specifically to 23S rRNA; its binding is stimulated by other ribosomal proteins, e.g. L4, L17, and L20. It is important during the early stages of 50S assembly. It makes multiple contacts with different domains of the 23S rRNA in the assembled 50S subunit and ribosome (By similarity).</text>
</comment>
<comment type="function">
    <text evidence="1">The globular domain of the protein is located near the polypeptide exit tunnel on the outside of the subunit, while an extended beta-hairpin is found that lines the wall of the exit tunnel in the center of the 70S ribosome.</text>
</comment>
<comment type="subunit">
    <text evidence="1">Part of the 50S ribosomal subunit.</text>
</comment>
<comment type="similarity">
    <text evidence="1">Belongs to the universal ribosomal protein uL22 family.</text>
</comment>
<sequence>MTKLDTTAEVKAIARYVRMSPLKVRRVLDQIRGRSYREALIILEFMPYKACEPVLKVLRSAVANAEHNEGLEPADLVVSQAFADGGPSLRRFRPRAQGRAYQIRKPTCHITVAVAPALADN</sequence>